<accession>Q7NLU2</accession>
<comment type="function">
    <text evidence="1">Catalyzes the radical-mediated insertion of two sulfur atoms into the C-6 and C-8 positions of the octanoyl moiety bound to the lipoyl domains of lipoate-dependent enzymes, thereby converting the octanoylated domains into lipoylated derivatives.</text>
</comment>
<comment type="catalytic activity">
    <reaction evidence="1">
        <text>[[Fe-S] cluster scaffold protein carrying a second [4Fe-4S](2+) cluster] + N(6)-octanoyl-L-lysyl-[protein] + 2 oxidized [2Fe-2S]-[ferredoxin] + 2 S-adenosyl-L-methionine + 4 H(+) = [[Fe-S] cluster scaffold protein] + N(6)-[(R)-dihydrolipoyl]-L-lysyl-[protein] + 4 Fe(3+) + 2 hydrogen sulfide + 2 5'-deoxyadenosine + 2 L-methionine + 2 reduced [2Fe-2S]-[ferredoxin]</text>
        <dbReference type="Rhea" id="RHEA:16585"/>
        <dbReference type="Rhea" id="RHEA-COMP:9928"/>
        <dbReference type="Rhea" id="RHEA-COMP:10000"/>
        <dbReference type="Rhea" id="RHEA-COMP:10001"/>
        <dbReference type="Rhea" id="RHEA-COMP:10475"/>
        <dbReference type="Rhea" id="RHEA-COMP:14568"/>
        <dbReference type="Rhea" id="RHEA-COMP:14569"/>
        <dbReference type="ChEBI" id="CHEBI:15378"/>
        <dbReference type="ChEBI" id="CHEBI:17319"/>
        <dbReference type="ChEBI" id="CHEBI:29034"/>
        <dbReference type="ChEBI" id="CHEBI:29919"/>
        <dbReference type="ChEBI" id="CHEBI:33722"/>
        <dbReference type="ChEBI" id="CHEBI:33737"/>
        <dbReference type="ChEBI" id="CHEBI:33738"/>
        <dbReference type="ChEBI" id="CHEBI:57844"/>
        <dbReference type="ChEBI" id="CHEBI:59789"/>
        <dbReference type="ChEBI" id="CHEBI:78809"/>
        <dbReference type="ChEBI" id="CHEBI:83100"/>
        <dbReference type="EC" id="2.8.1.8"/>
    </reaction>
</comment>
<comment type="cofactor">
    <cofactor evidence="1">
        <name>[4Fe-4S] cluster</name>
        <dbReference type="ChEBI" id="CHEBI:49883"/>
    </cofactor>
    <text evidence="1">Binds 2 [4Fe-4S] clusters per subunit. One cluster is coordinated with 3 cysteines and an exchangeable S-adenosyl-L-methionine.</text>
</comment>
<comment type="pathway">
    <text evidence="1">Protein modification; protein lipoylation via endogenous pathway; protein N(6)-(lipoyl)lysine from octanoyl-[acyl-carrier-protein]: step 2/2.</text>
</comment>
<comment type="subcellular location">
    <subcellularLocation>
        <location evidence="1">Cytoplasm</location>
    </subcellularLocation>
</comment>
<comment type="similarity">
    <text evidence="1">Belongs to the radical SAM superfamily. Lipoyl synthase family.</text>
</comment>
<sequence>MVTKPDWLRVKAPQRERVGAVKDILRDLALNTVCEEASCPNIGECFKAGTATFLIMGPACTRACPYCDIDFEKYPKALDPTEPERLAQAVRRMGLRHVVITSVNRDDLADGGALQFARCIEAVRRVMPQTTIEVLIPDFCGSEAALDIVIAAHPQVINHNTETVPRLYRRVRPQGDYGRTLQLLERVRAKASHIYTKSGLMAGLGESEAEVLAVMADLRAVYCDILTIGQYLQPTPKHLKVEAFVEPALFERWRRAGEGMGFLQMVSSPLTRSSYHAEQVQRLMRSHPRTPKNQHSPE</sequence>
<dbReference type="EC" id="2.8.1.8" evidence="1"/>
<dbReference type="EMBL" id="BA000045">
    <property type="protein sequence ID" value="BAC88970.1"/>
    <property type="molecule type" value="Genomic_DNA"/>
</dbReference>
<dbReference type="RefSeq" id="NP_923975.1">
    <property type="nucleotide sequence ID" value="NC_005125.1"/>
</dbReference>
<dbReference type="RefSeq" id="WP_011141031.1">
    <property type="nucleotide sequence ID" value="NC_005125.1"/>
</dbReference>
<dbReference type="SMR" id="Q7NLU2"/>
<dbReference type="STRING" id="251221.gene:10758507"/>
<dbReference type="EnsemblBacteria" id="BAC88970">
    <property type="protein sequence ID" value="BAC88970"/>
    <property type="gene ID" value="BAC88970"/>
</dbReference>
<dbReference type="KEGG" id="gvi:gll1029"/>
<dbReference type="PATRIC" id="fig|251221.4.peg.1054"/>
<dbReference type="eggNOG" id="COG0320">
    <property type="taxonomic scope" value="Bacteria"/>
</dbReference>
<dbReference type="HOGENOM" id="CLU_033144_2_1_3"/>
<dbReference type="InParanoid" id="Q7NLU2"/>
<dbReference type="OrthoDB" id="9787898at2"/>
<dbReference type="PhylomeDB" id="Q7NLU2"/>
<dbReference type="UniPathway" id="UPA00538">
    <property type="reaction ID" value="UER00593"/>
</dbReference>
<dbReference type="Proteomes" id="UP000000557">
    <property type="component" value="Chromosome"/>
</dbReference>
<dbReference type="GO" id="GO:0005737">
    <property type="term" value="C:cytoplasm"/>
    <property type="evidence" value="ECO:0007669"/>
    <property type="project" value="UniProtKB-SubCell"/>
</dbReference>
<dbReference type="GO" id="GO:0051539">
    <property type="term" value="F:4 iron, 4 sulfur cluster binding"/>
    <property type="evidence" value="ECO:0007669"/>
    <property type="project" value="UniProtKB-UniRule"/>
</dbReference>
<dbReference type="GO" id="GO:0016992">
    <property type="term" value="F:lipoate synthase activity"/>
    <property type="evidence" value="ECO:0007669"/>
    <property type="project" value="UniProtKB-UniRule"/>
</dbReference>
<dbReference type="GO" id="GO:0046872">
    <property type="term" value="F:metal ion binding"/>
    <property type="evidence" value="ECO:0007669"/>
    <property type="project" value="UniProtKB-KW"/>
</dbReference>
<dbReference type="CDD" id="cd01335">
    <property type="entry name" value="Radical_SAM"/>
    <property type="match status" value="1"/>
</dbReference>
<dbReference type="FunFam" id="3.20.20.70:FF:000186">
    <property type="entry name" value="Lipoyl synthase"/>
    <property type="match status" value="1"/>
</dbReference>
<dbReference type="Gene3D" id="3.20.20.70">
    <property type="entry name" value="Aldolase class I"/>
    <property type="match status" value="1"/>
</dbReference>
<dbReference type="HAMAP" id="MF_00206">
    <property type="entry name" value="Lipoyl_synth"/>
    <property type="match status" value="1"/>
</dbReference>
<dbReference type="InterPro" id="IPR013785">
    <property type="entry name" value="Aldolase_TIM"/>
</dbReference>
<dbReference type="InterPro" id="IPR006638">
    <property type="entry name" value="Elp3/MiaA/NifB-like_rSAM"/>
</dbReference>
<dbReference type="InterPro" id="IPR003698">
    <property type="entry name" value="Lipoyl_synth"/>
</dbReference>
<dbReference type="InterPro" id="IPR007197">
    <property type="entry name" value="rSAM"/>
</dbReference>
<dbReference type="NCBIfam" id="TIGR00510">
    <property type="entry name" value="lipA"/>
    <property type="match status" value="1"/>
</dbReference>
<dbReference type="NCBIfam" id="NF004019">
    <property type="entry name" value="PRK05481.1"/>
    <property type="match status" value="1"/>
</dbReference>
<dbReference type="NCBIfam" id="NF009544">
    <property type="entry name" value="PRK12928.1"/>
    <property type="match status" value="1"/>
</dbReference>
<dbReference type="PANTHER" id="PTHR10949">
    <property type="entry name" value="LIPOYL SYNTHASE"/>
    <property type="match status" value="1"/>
</dbReference>
<dbReference type="PANTHER" id="PTHR10949:SF0">
    <property type="entry name" value="LIPOYL SYNTHASE, MITOCHONDRIAL"/>
    <property type="match status" value="1"/>
</dbReference>
<dbReference type="Pfam" id="PF04055">
    <property type="entry name" value="Radical_SAM"/>
    <property type="match status" value="1"/>
</dbReference>
<dbReference type="PIRSF" id="PIRSF005963">
    <property type="entry name" value="Lipoyl_synth"/>
    <property type="match status" value="1"/>
</dbReference>
<dbReference type="SFLD" id="SFLDF00271">
    <property type="entry name" value="lipoyl_synthase"/>
    <property type="match status" value="1"/>
</dbReference>
<dbReference type="SFLD" id="SFLDS00029">
    <property type="entry name" value="Radical_SAM"/>
    <property type="match status" value="1"/>
</dbReference>
<dbReference type="SMART" id="SM00729">
    <property type="entry name" value="Elp3"/>
    <property type="match status" value="1"/>
</dbReference>
<dbReference type="SUPFAM" id="SSF102114">
    <property type="entry name" value="Radical SAM enzymes"/>
    <property type="match status" value="1"/>
</dbReference>
<dbReference type="PROSITE" id="PS51918">
    <property type="entry name" value="RADICAL_SAM"/>
    <property type="match status" value="1"/>
</dbReference>
<gene>
    <name evidence="1" type="primary">lipA1</name>
    <name type="ordered locus">gll1029</name>
</gene>
<proteinExistence type="inferred from homology"/>
<keyword id="KW-0004">4Fe-4S</keyword>
<keyword id="KW-0963">Cytoplasm</keyword>
<keyword id="KW-0408">Iron</keyword>
<keyword id="KW-0411">Iron-sulfur</keyword>
<keyword id="KW-0479">Metal-binding</keyword>
<keyword id="KW-1185">Reference proteome</keyword>
<keyword id="KW-0949">S-adenosyl-L-methionine</keyword>
<keyword id="KW-0808">Transferase</keyword>
<organism>
    <name type="scientific">Gloeobacter violaceus (strain ATCC 29082 / PCC 7421)</name>
    <dbReference type="NCBI Taxonomy" id="251221"/>
    <lineage>
        <taxon>Bacteria</taxon>
        <taxon>Bacillati</taxon>
        <taxon>Cyanobacteriota</taxon>
        <taxon>Cyanophyceae</taxon>
        <taxon>Gloeobacterales</taxon>
        <taxon>Gloeobacteraceae</taxon>
        <taxon>Gloeobacter</taxon>
    </lineage>
</organism>
<feature type="chain" id="PRO_0000102318" description="Lipoyl synthase 1">
    <location>
        <begin position="1"/>
        <end position="298"/>
    </location>
</feature>
<feature type="domain" description="Radical SAM core" evidence="2">
    <location>
        <begin position="46"/>
        <end position="263"/>
    </location>
</feature>
<feature type="region of interest" description="Disordered" evidence="3">
    <location>
        <begin position="277"/>
        <end position="298"/>
    </location>
</feature>
<feature type="binding site" evidence="1">
    <location>
        <position position="34"/>
    </location>
    <ligand>
        <name>[4Fe-4S] cluster</name>
        <dbReference type="ChEBI" id="CHEBI:49883"/>
        <label>1</label>
    </ligand>
</feature>
<feature type="binding site" evidence="1">
    <location>
        <position position="39"/>
    </location>
    <ligand>
        <name>[4Fe-4S] cluster</name>
        <dbReference type="ChEBI" id="CHEBI:49883"/>
        <label>1</label>
    </ligand>
</feature>
<feature type="binding site" evidence="1">
    <location>
        <position position="45"/>
    </location>
    <ligand>
        <name>[4Fe-4S] cluster</name>
        <dbReference type="ChEBI" id="CHEBI:49883"/>
        <label>1</label>
    </ligand>
</feature>
<feature type="binding site" evidence="1">
    <location>
        <position position="60"/>
    </location>
    <ligand>
        <name>[4Fe-4S] cluster</name>
        <dbReference type="ChEBI" id="CHEBI:49883"/>
        <label>2</label>
        <note>4Fe-4S-S-AdoMet</note>
    </ligand>
</feature>
<feature type="binding site" evidence="1">
    <location>
        <position position="64"/>
    </location>
    <ligand>
        <name>[4Fe-4S] cluster</name>
        <dbReference type="ChEBI" id="CHEBI:49883"/>
        <label>2</label>
        <note>4Fe-4S-S-AdoMet</note>
    </ligand>
</feature>
<feature type="binding site" evidence="1">
    <location>
        <position position="67"/>
    </location>
    <ligand>
        <name>[4Fe-4S] cluster</name>
        <dbReference type="ChEBI" id="CHEBI:49883"/>
        <label>2</label>
        <note>4Fe-4S-S-AdoMet</note>
    </ligand>
</feature>
<feature type="binding site" evidence="1">
    <location>
        <position position="274"/>
    </location>
    <ligand>
        <name>[4Fe-4S] cluster</name>
        <dbReference type="ChEBI" id="CHEBI:49883"/>
        <label>1</label>
    </ligand>
</feature>
<evidence type="ECO:0000255" key="1">
    <source>
        <dbReference type="HAMAP-Rule" id="MF_00206"/>
    </source>
</evidence>
<evidence type="ECO:0000255" key="2">
    <source>
        <dbReference type="PROSITE-ProRule" id="PRU01266"/>
    </source>
</evidence>
<evidence type="ECO:0000256" key="3">
    <source>
        <dbReference type="SAM" id="MobiDB-lite"/>
    </source>
</evidence>
<reference key="1">
    <citation type="journal article" date="2003" name="DNA Res.">
        <title>Complete genome structure of Gloeobacter violaceus PCC 7421, a cyanobacterium that lacks thylakoids.</title>
        <authorList>
            <person name="Nakamura Y."/>
            <person name="Kaneko T."/>
            <person name="Sato S."/>
            <person name="Mimuro M."/>
            <person name="Miyashita H."/>
            <person name="Tsuchiya T."/>
            <person name="Sasamoto S."/>
            <person name="Watanabe A."/>
            <person name="Kawashima K."/>
            <person name="Kishida Y."/>
            <person name="Kiyokawa C."/>
            <person name="Kohara M."/>
            <person name="Matsumoto M."/>
            <person name="Matsuno A."/>
            <person name="Nakazaki N."/>
            <person name="Shimpo S."/>
            <person name="Takeuchi C."/>
            <person name="Yamada M."/>
            <person name="Tabata S."/>
        </authorList>
    </citation>
    <scope>NUCLEOTIDE SEQUENCE [LARGE SCALE GENOMIC DNA]</scope>
    <source>
        <strain>ATCC 29082 / PCC 7421</strain>
    </source>
</reference>
<name>LIPA1_GLOVI</name>
<protein>
    <recommendedName>
        <fullName evidence="1">Lipoyl synthase 1</fullName>
        <ecNumber evidence="1">2.8.1.8</ecNumber>
    </recommendedName>
    <alternativeName>
        <fullName evidence="1">Lip-syn 1</fullName>
        <shortName evidence="1">LS 1</shortName>
    </alternativeName>
    <alternativeName>
        <fullName evidence="1">Lipoate synthase 1</fullName>
    </alternativeName>
    <alternativeName>
        <fullName evidence="1">Lipoic acid synthase 1</fullName>
    </alternativeName>
    <alternativeName>
        <fullName evidence="1">Sulfur insertion protein LipA 1</fullName>
    </alternativeName>
</protein>